<comment type="function">
    <text evidence="1">Polynucleotide 5'-kinase involved in rRNA processing.</text>
</comment>
<comment type="subcellular location">
    <subcellularLocation>
        <location evidence="1">Nucleus</location>
        <location evidence="1">Nucleolus</location>
    </subcellularLocation>
</comment>
<comment type="similarity">
    <text evidence="4">Belongs to the Clp1 family. NOL9/GRC3 subfamily.</text>
</comment>
<dbReference type="EC" id="2.7.1.-"/>
<dbReference type="EMBL" id="AAEY01000019">
    <property type="protein sequence ID" value="EAL21514.1"/>
    <property type="molecule type" value="Genomic_DNA"/>
</dbReference>
<dbReference type="RefSeq" id="XP_776161.1">
    <property type="nucleotide sequence ID" value="XM_771068.1"/>
</dbReference>
<dbReference type="SMR" id="P0CM79"/>
<dbReference type="GeneID" id="4935597"/>
<dbReference type="KEGG" id="cnb:CNBD2080"/>
<dbReference type="VEuPathDB" id="FungiDB:CNBD2080"/>
<dbReference type="HOGENOM" id="CLU_010345_0_0_1"/>
<dbReference type="OrthoDB" id="8708at5206"/>
<dbReference type="GO" id="GO:0005730">
    <property type="term" value="C:nucleolus"/>
    <property type="evidence" value="ECO:0007669"/>
    <property type="project" value="UniProtKB-SubCell"/>
</dbReference>
<dbReference type="GO" id="GO:0005524">
    <property type="term" value="F:ATP binding"/>
    <property type="evidence" value="ECO:0007669"/>
    <property type="project" value="UniProtKB-KW"/>
</dbReference>
<dbReference type="GO" id="GO:0051731">
    <property type="term" value="F:polynucleotide 5'-hydroxyl-kinase activity"/>
    <property type="evidence" value="ECO:0000250"/>
    <property type="project" value="UniProtKB"/>
</dbReference>
<dbReference type="GO" id="GO:0000448">
    <property type="term" value="P:cleavage in ITS2 between 5.8S rRNA and LSU-rRNA of tricistronic rRNA transcript (SSU-rRNA, 5.8S rRNA, LSU-rRNA)"/>
    <property type="evidence" value="ECO:0007669"/>
    <property type="project" value="TreeGrafter"/>
</dbReference>
<dbReference type="GO" id="GO:0006364">
    <property type="term" value="P:rRNA processing"/>
    <property type="evidence" value="ECO:0000250"/>
    <property type="project" value="UniProtKB"/>
</dbReference>
<dbReference type="FunFam" id="3.40.50.300:FF:002899">
    <property type="entry name" value="Unplaced genomic scaffold supercont1.83, whole genome shotgun sequence"/>
    <property type="match status" value="1"/>
</dbReference>
<dbReference type="Gene3D" id="3.40.50.300">
    <property type="entry name" value="P-loop containing nucleotide triphosphate hydrolases"/>
    <property type="match status" value="1"/>
</dbReference>
<dbReference type="InterPro" id="IPR045116">
    <property type="entry name" value="Clp1/Grc3"/>
</dbReference>
<dbReference type="InterPro" id="IPR032319">
    <property type="entry name" value="CLP1_P"/>
</dbReference>
<dbReference type="InterPro" id="IPR027417">
    <property type="entry name" value="P-loop_NTPase"/>
</dbReference>
<dbReference type="PANTHER" id="PTHR12755">
    <property type="entry name" value="CLEAVAGE/POLYADENYLATION FACTOR IA SUBUNIT CLP1P"/>
    <property type="match status" value="1"/>
</dbReference>
<dbReference type="PANTHER" id="PTHR12755:SF3">
    <property type="entry name" value="POLYNUCLEOTIDE 5'-HYDROXYL-KINASE NOL9"/>
    <property type="match status" value="1"/>
</dbReference>
<dbReference type="Pfam" id="PF16575">
    <property type="entry name" value="CLP1_P"/>
    <property type="match status" value="1"/>
</dbReference>
<proteinExistence type="inferred from homology"/>
<name>GRC3_CRYNB</name>
<accession>P0CM79</accession>
<accession>Q55U98</accession>
<accession>Q5KI47</accession>
<protein>
    <recommendedName>
        <fullName>Polynucleotide 5'-hydroxyl-kinase GRC3</fullName>
        <ecNumber>2.7.1.-</ecNumber>
    </recommendedName>
</protein>
<feature type="chain" id="PRO_0000410042" description="Polynucleotide 5'-hydroxyl-kinase GRC3">
    <location>
        <begin position="1"/>
        <end position="744"/>
    </location>
</feature>
<feature type="region of interest" description="Disordered" evidence="3">
    <location>
        <begin position="1"/>
        <end position="131"/>
    </location>
</feature>
<feature type="compositionally biased region" description="Low complexity" evidence="3">
    <location>
        <begin position="1"/>
        <end position="14"/>
    </location>
</feature>
<feature type="compositionally biased region" description="Basic residues" evidence="3">
    <location>
        <begin position="39"/>
        <end position="55"/>
    </location>
</feature>
<feature type="compositionally biased region" description="Polar residues" evidence="3">
    <location>
        <begin position="61"/>
        <end position="82"/>
    </location>
</feature>
<feature type="compositionally biased region" description="Low complexity" evidence="3">
    <location>
        <begin position="83"/>
        <end position="99"/>
    </location>
</feature>
<feature type="compositionally biased region" description="Acidic residues" evidence="3">
    <location>
        <begin position="100"/>
        <end position="111"/>
    </location>
</feature>
<feature type="compositionally biased region" description="Basic and acidic residues" evidence="3">
    <location>
        <begin position="112"/>
        <end position="125"/>
    </location>
</feature>
<feature type="binding site" evidence="2">
    <location>
        <begin position="331"/>
        <end position="338"/>
    </location>
    <ligand>
        <name>ATP</name>
        <dbReference type="ChEBI" id="CHEBI:30616"/>
    </ligand>
</feature>
<sequence length="744" mass="81009">MSALAARRATAAAASPKPEQPESSIEEVSVSGALTLPSPKRRKTRQTSPKPRSKARYSDDVPTSRQFFQATESLAEQRTGRFSPSAPDSDGGTSSSSVGDSDEDMAQEDEFEDRREVDGERDQRKVSVAANMSSSGPFKSLDLMPVDITSQFNPKDNVNFCRITEGQLASAEMNDGHPGPGVIVSLARNESLTIAGLFLLTPLQNTLSIYSTALSPSMSSFPVYAPTSHPLPVISPASTQAPGKESDKTLLLIRENRCGIDGLRNGAVPGFSNIWLEDNGPWGLRGVHPVVGSFPVPVYPYCTPPSWSHAISSLSSSDVNLQTPFVGLVKGPKRSGKSTFARALLNNLLRRFRKVAWLECDLGQGEFGSGAVVGLWILDKPALGPPFTHPLLPSRSHYLGTYTPLTCPDEYLVAIRHLIEHYKYELQYTSEYSALHTTVHDKISTHVPLVINTQGWMKGLGEELLNVIESMAQPTRVFSFESQSEEVYSGQGWTSTPPWQATQLPYDPAYPTTEPVETEVTQTYSLETAPVSALQARYTPADLRVLSAITYFHASLHPTQSVPVTWDISSPLVCTIPWEVELGIGKALEKVYLIGEGSEGVLEEDLPIALNGAIVALAEMLGSYEDEPTVYEQGRSPPPTDLVNILGLAVIRSLSSGNSVNPGLKLQLLTPLPPSYLSRARILIKSGALELPLPGMIDWRRGGINEEGMLGKGWEEIPFLDVGGLDVIGGERRRFRKNIMRKGM</sequence>
<reference key="1">
    <citation type="journal article" date="2005" name="Science">
        <title>The genome of the basidiomycetous yeast and human pathogen Cryptococcus neoformans.</title>
        <authorList>
            <person name="Loftus B.J."/>
            <person name="Fung E."/>
            <person name="Roncaglia P."/>
            <person name="Rowley D."/>
            <person name="Amedeo P."/>
            <person name="Bruno D."/>
            <person name="Vamathevan J."/>
            <person name="Miranda M."/>
            <person name="Anderson I.J."/>
            <person name="Fraser J.A."/>
            <person name="Allen J.E."/>
            <person name="Bosdet I.E."/>
            <person name="Brent M.R."/>
            <person name="Chiu R."/>
            <person name="Doering T.L."/>
            <person name="Donlin M.J."/>
            <person name="D'Souza C.A."/>
            <person name="Fox D.S."/>
            <person name="Grinberg V."/>
            <person name="Fu J."/>
            <person name="Fukushima M."/>
            <person name="Haas B.J."/>
            <person name="Huang J.C."/>
            <person name="Janbon G."/>
            <person name="Jones S.J.M."/>
            <person name="Koo H.L."/>
            <person name="Krzywinski M.I."/>
            <person name="Kwon-Chung K.J."/>
            <person name="Lengeler K.B."/>
            <person name="Maiti R."/>
            <person name="Marra M.A."/>
            <person name="Marra R.E."/>
            <person name="Mathewson C.A."/>
            <person name="Mitchell T.G."/>
            <person name="Pertea M."/>
            <person name="Riggs F.R."/>
            <person name="Salzberg S.L."/>
            <person name="Schein J.E."/>
            <person name="Shvartsbeyn A."/>
            <person name="Shin H."/>
            <person name="Shumway M."/>
            <person name="Specht C.A."/>
            <person name="Suh B.B."/>
            <person name="Tenney A."/>
            <person name="Utterback T.R."/>
            <person name="Wickes B.L."/>
            <person name="Wortman J.R."/>
            <person name="Wye N.H."/>
            <person name="Kronstad J.W."/>
            <person name="Lodge J.K."/>
            <person name="Heitman J."/>
            <person name="Davis R.W."/>
            <person name="Fraser C.M."/>
            <person name="Hyman R.W."/>
        </authorList>
    </citation>
    <scope>NUCLEOTIDE SEQUENCE [LARGE SCALE GENOMIC DNA]</scope>
    <source>
        <strain>B-3501A</strain>
    </source>
</reference>
<organism>
    <name type="scientific">Cryptococcus neoformans var. neoformans serotype D (strain B-3501A)</name>
    <name type="common">Filobasidiella neoformans</name>
    <dbReference type="NCBI Taxonomy" id="283643"/>
    <lineage>
        <taxon>Eukaryota</taxon>
        <taxon>Fungi</taxon>
        <taxon>Dikarya</taxon>
        <taxon>Basidiomycota</taxon>
        <taxon>Agaricomycotina</taxon>
        <taxon>Tremellomycetes</taxon>
        <taxon>Tremellales</taxon>
        <taxon>Cryptococcaceae</taxon>
        <taxon>Cryptococcus</taxon>
        <taxon>Cryptococcus neoformans species complex</taxon>
    </lineage>
</organism>
<gene>
    <name type="primary">GRC3</name>
    <name type="ordered locus">CNBD2080</name>
</gene>
<evidence type="ECO:0000250" key="1"/>
<evidence type="ECO:0000255" key="2"/>
<evidence type="ECO:0000256" key="3">
    <source>
        <dbReference type="SAM" id="MobiDB-lite"/>
    </source>
</evidence>
<evidence type="ECO:0000305" key="4"/>
<keyword id="KW-0067">ATP-binding</keyword>
<keyword id="KW-0418">Kinase</keyword>
<keyword id="KW-0547">Nucleotide-binding</keyword>
<keyword id="KW-0539">Nucleus</keyword>
<keyword id="KW-0698">rRNA processing</keyword>
<keyword id="KW-0808">Transferase</keyword>